<feature type="chain" id="PRO_0000047076" description="Longitudinals lacking protein, isoforms J/P/Q/S/Z">
    <location>
        <begin position="1"/>
        <end position="963"/>
    </location>
</feature>
<feature type="domain" description="BTB" evidence="1">
    <location>
        <begin position="32"/>
        <end position="97"/>
    </location>
</feature>
<feature type="zinc finger region" description="C2H2-type 1; degenerate" evidence="2">
    <location>
        <begin position="849"/>
        <end position="871"/>
    </location>
</feature>
<feature type="zinc finger region" description="C2H2-type 2; degenerate" evidence="2">
    <location>
        <begin position="878"/>
        <end position="901"/>
    </location>
</feature>
<feature type="region of interest" description="Disordered" evidence="3">
    <location>
        <begin position="115"/>
        <end position="200"/>
    </location>
</feature>
<feature type="region of interest" description="Disordered" evidence="3">
    <location>
        <begin position="228"/>
        <end position="340"/>
    </location>
</feature>
<feature type="region of interest" description="Disordered" evidence="3">
    <location>
        <begin position="447"/>
        <end position="469"/>
    </location>
</feature>
<feature type="region of interest" description="Disordered" evidence="3">
    <location>
        <begin position="482"/>
        <end position="520"/>
    </location>
</feature>
<feature type="region of interest" description="Disordered" evidence="3">
    <location>
        <begin position="900"/>
        <end position="963"/>
    </location>
</feature>
<feature type="compositionally biased region" description="Low complexity" evidence="3">
    <location>
        <begin position="162"/>
        <end position="175"/>
    </location>
</feature>
<feature type="compositionally biased region" description="Low complexity" evidence="3">
    <location>
        <begin position="228"/>
        <end position="251"/>
    </location>
</feature>
<feature type="compositionally biased region" description="Low complexity" evidence="3">
    <location>
        <begin position="263"/>
        <end position="293"/>
    </location>
</feature>
<feature type="compositionally biased region" description="Low complexity" evidence="3">
    <location>
        <begin position="329"/>
        <end position="340"/>
    </location>
</feature>
<feature type="compositionally biased region" description="Polar residues" evidence="3">
    <location>
        <begin position="491"/>
        <end position="512"/>
    </location>
</feature>
<feature type="compositionally biased region" description="Basic and acidic residues" evidence="3">
    <location>
        <begin position="901"/>
        <end position="915"/>
    </location>
</feature>
<feature type="compositionally biased region" description="Low complexity" evidence="3">
    <location>
        <begin position="937"/>
        <end position="953"/>
    </location>
</feature>
<feature type="compositionally biased region" description="Polar residues" evidence="3">
    <location>
        <begin position="954"/>
        <end position="963"/>
    </location>
</feature>
<feature type="splice variant" id="VSP_051809" description="In isoform J." evidence="11">
    <original>DEAGQNEGGESRIRVRNWLMLADKSIIGKSSDEPSDKLTQSKKSLISDAKTTNKTSTPIRPKVSTTTTSTSTAAAAAAAATIAAKQAAAAIASSNINNNNSSLTQTVTQTVTRIGSIGRTTIACITPANNGNKSSSSNCNVDAASAAALAAAGVELDSIDDTMTEVIVKIENPESMPLNDDEDDAVCNEAIEDENTFDYDLKLGSPLSWTYDAVKIENEEFEDSYLMDNDDDDDDLLTTAAATQKHAKQSNEKQMAGSMVAGAGSGGAVKKIVLSAQQQQQLLEQQQHLQHLQLQPTSQSLQI</original>
    <variation>DFGRLSPNRRNYNLLGGIKSSPYNSPIGTPVIKFEPGSGQEDHNEHKSGRVTPTAHCPGNLLVPKTQPRHGNGDNDDSNDEDSMEPCDLRIDLAKAFLAAAQSGAATTLPLGHHHHHGHHPHGRTLPNLIYPAVPVKVPRPDTPTRRYSSSSGPVQDAASSVAVQFVAAAAAAGLAANNTSASTNTGGGASTSAAAAAAAAAAAAAAAAAAGGSVAGNWSSGGGSGGAGGGIGGGGSGGGGGGGGGGAYACDRCGNTYARPHSLNRHVRFECGVEPKFECPICHKKSKHKHNLVLHMRTHQHR</variation>
    <location>
        <begin position="455"/>
        <end position="757"/>
    </location>
</feature>
<feature type="splice variant" id="VSP_017255" description="In isoform S." evidence="13">
    <original>DEAGQNEGGESRIRVRNWLMLADKSIIGKSSDEPSDKLTQSKKSLISDAKTTNKTSTPIRPKVSTTTTSTSTAAAAAAAATIAAKQAAAAIASSNINNNNSSLTQTVTQTVTRIGSIGRTTIACITPANNGNKSSSSNCNVDAASAAALAAAGVELDSIDDTMTEVIVKIENPESMPLNDDEDDAVCNEAIEDENTFDYDLKLGSPLSWTYDAVKIENEEFEDSYLMDNDDDDDDLLTTAAATQKHAKQSNEKQMAGSMVAGAGSG</original>
    <variation>ARTQHEHIHTTPPAISLFLNSTTPYFDSLSLSVLSVRIVKQSQQILDKNPITILTDLRTLYCNYATAVIAAASAASKKPAEHQTAASSTANHQNQNLNHQNLLQQHHSNSSSNSNCGPAAEICEPEVTIRRMFKCGNSGQAEAIVNHLQMTGQQHQQLHCNVSNCSGCHMSAAAASFQLANLLNSGIRSSSTSKPQRNHISASGNTSSSSNANTNNNSSGNSSLSLAAKKTSVQFHCEFCNFSCSWRYDLKLHLRQKHGIHQLKKV</variation>
    <location>
        <begin position="455"/>
        <end position="720"/>
    </location>
</feature>
<feature type="splice variant" id="VSP_051807" description="In isoform Q." evidence="11">
    <original>DEAGQNEGGESRIRVRNWLMLADKSIIGKSSDEPSDKLTQSKKSLISDAKTTNKTSTPIRPKVSTTTTSTSTAAAAAAAATIAAKQAAAAIASSNINNNNSSLTQTVTQTVTRIGSIGRTTIACITPANNGNKSSSSNCNVDAASAAAL</original>
    <variation>DSMVVPKITAVRGSSKRLARRKATLAIATAMATSASATHMMSRRKRTSSSCRNASSGGNAPSTSTSASSATTASISKSKCKSSDAASAPFVCQTCGRRYQVLGTLRRHMRKECNQPKKYVCRMCERRFHYNFKLQDHYYYVHKGVQKRE</variation>
    <location>
        <begin position="455"/>
        <end position="603"/>
    </location>
</feature>
<feature type="splice variant" id="VSP_051808" description="In isoform Z." evidence="11">
    <original>EAGQNEGGESRIRVRNWLMLADKSIIGKSSDEPSDKLTQSKKSLISDAKTTNKTSTPIRPKVSTTTTSTSTAAAAAAAATIAAKQAAAAIASSNINNNNSSLTQTVTQTVTRIGSIGRTTIACITPANNGNKSSSSNCNVDAASAAALAAAGVELDSIDDTMTEVIVKIENPESMPLNDDEDDAVCNEAIEDENTFDYDLKLGSPLSWTY</original>
    <variation>LRTLYCNYATAVIAAASAASKKPAEHQTAASSTANHQNQNLNHQNLLQQHHSNSSSNSNCGPAAEICEPEVTIRRMFKCGNSGQAEAIVNHLQMTGQQHQQLHCNVSNCSGCHMSAAAASFQLANLLNSGIRSSSTSKPQRNHISASGNTSSSSNANTNNNSSGNSSLSLAAKKTSVQFHCEFCNFSCSWRYDLKLHLRQKHGIHQLKKV</variation>
    <location>
        <begin position="456"/>
        <end position="665"/>
    </location>
</feature>
<feature type="splice variant" id="VSP_051810" description="In isoform Q." evidence="11">
    <location>
        <begin position="604"/>
        <end position="963"/>
    </location>
</feature>
<feature type="splice variant" id="VSP_051811" description="In isoform Z." evidence="11">
    <location>
        <begin position="666"/>
        <end position="963"/>
    </location>
</feature>
<feature type="splice variant" id="VSP_017256" description="In isoform S." evidence="13">
    <location>
        <begin position="721"/>
        <end position="963"/>
    </location>
</feature>
<feature type="splice variant" id="VSP_051812" description="In isoform J." evidence="11">
    <location>
        <begin position="758"/>
        <end position="963"/>
    </location>
</feature>
<feature type="mutagenesis site" description="In ORE120; defective in embryonic axon guidance." evidence="5">
    <original>A</original>
    <variation>V</variation>
    <location>
        <position position="107"/>
    </location>
</feature>
<feature type="sequence conflict" description="In Ref. 4; ABJ17042." evidence="13" ref="4">
    <original>L</original>
    <variation>F</variation>
    <location>
        <position position="115"/>
    </location>
</feature>
<feature type="sequence conflict" description="In Ref. 1; BAC67578/BAC67598/BAC67618/BAC67638." evidence="13" ref="1">
    <original>A</original>
    <variation>G</variation>
    <location sequence="Q9V5M6-3">
        <position position="477"/>
    </location>
</feature>
<feature type="sequence conflict" description="In Ref. 1; BAC67578/BAC67598/BAC67618/BAC67638." evidence="13" ref="1">
    <original>M</original>
    <variation>I</variation>
    <location sequence="Q9V5M6-3">
        <position position="485"/>
    </location>
</feature>
<feature type="sequence conflict" description="In Ref. 1; BAC67601/BAC67621/BAC67641." evidence="13" ref="1">
    <original>S</original>
    <variation>N</variation>
    <location sequence="Q9V5M6-5">
        <position position="475"/>
    </location>
</feature>
<feature type="sequence conflict" description="In Ref. 1; BAC67601/BAC67621/BAC67641." evidence="13" ref="1">
    <original>M</original>
    <variation>V</variation>
    <location sequence="Q9V5M6-5">
        <position position="549"/>
    </location>
</feature>
<feature type="sequence conflict" description="In Ref. 1; BAC67601/BAC67621/BAC67641." evidence="13" ref="1">
    <original>A</original>
    <variation>V</variation>
    <location sequence="Q9V5M6-5">
        <position position="626"/>
    </location>
</feature>
<name>LOLA5_DROME</name>
<protein>
    <recommendedName>
        <fullName>Longitudinals lacking protein, isoforms J/P/Q/S/Z</fullName>
    </recommendedName>
</protein>
<gene>
    <name evidence="16" type="primary">lola</name>
    <name evidence="16" type="ORF">CG12052</name>
</gene>
<keyword id="KW-0025">Alternative splicing</keyword>
<keyword id="KW-0217">Developmental protein</keyword>
<keyword id="KW-0221">Differentiation</keyword>
<keyword id="KW-0238">DNA-binding</keyword>
<keyword id="KW-0479">Metal-binding</keyword>
<keyword id="KW-0524">Neurogenesis</keyword>
<keyword id="KW-0539">Nucleus</keyword>
<keyword id="KW-1185">Reference proteome</keyword>
<keyword id="KW-0677">Repeat</keyword>
<keyword id="KW-0804">Transcription</keyword>
<keyword id="KW-0805">Transcription regulation</keyword>
<keyword id="KW-0862">Zinc</keyword>
<keyword id="KW-0863">Zinc-finger</keyword>
<accession>Q9V5M6</accession>
<accession>Q058V9</accession>
<accession>Q4AB07</accession>
<accession>Q867J5</accession>
<accession>Q867M8</accession>
<accession>Q867P1</accession>
<accession>Q867T8</accession>
<accession>Q86BC2</accession>
<accession>Q8MKX4</accession>
<accession>Q9V5M5</accession>
<sequence>MDDDQQFCLRWNNHQSTLISVFDTLLENETLVDCTLAAEGKFLKAHKVVLSACSPYFATLLQEQYDKHPIFILKDVKYQELRAMMDYMYRGEVNISQDQLAALLKAAESLQIKGLSDNRTGGGVAPKPESSGHHRGGKLSGAYTLEQTKRARLATGGAMDTSGDVSGSREGSSSPSRRRRKVRRRSMENDAHDNSNSSVLQAAASNQSILQQTGAGLAVSALVTTQLSSGPAAGTSSQASSTQQQQPLTSTNVTKKTESAKLTSSTAAPASGASASAAVQQAHLHQQQAQTTSDAINTENVQAQSQGGAQGVQGDDEDIDEGSAVGGPNSATGPNPASASASAVHAGVVVKQLASVVDKSSSNHKHKIKDNSVSSVGSEMVIEPKAEYDDDAHDENVEDLTLDEEDMTMEELDQTAGTSQGGEGSSQTYATWQHDRSQDELGLMAQDAQQRDPQDEAGQNEGGESRIRVRNWLMLADKSIIGKSSDEPSDKLTQSKKSLISDAKTTNKTSTPIRPKVSTTTTSTSTAAAAAAAATIAAKQAAAAIASSNINNNNSSLTQTVTQTVTRIGSIGRTTIACITPANNGNKSSSSNCNVDAASAAALAAAGVELDSIDDTMTEVIVKIENPESMPLNDDEDDAVCNEAIEDENTFDYDLKLGSPLSWTYDAVKIENEEFEDSYLMDNDDDDDDLLTTAAATQKHAKQSNEKQMAGSMVAGAGSGGAVKKIVLSAQQQQQLLEQQQHLQHLQLQPTSQSLQIKLPAIPATITTISAPKQMMSGAGTSGSLTPNNNCTLMSNKLGLPVKGQNLDLHWSHSDDNRYRVLVQNKRTRKESLEHSADMIYNADIEKPWVCRNCNRTYKWKNSLKCHLKNECGLPPRYFCSKMCGYATNVHSNLKRHLNTKCRDREKDADDEKKPGSASGNMPVVVGVGNGTAVPVSSSNNNNNGGGSSTSSTYTLVFQNDSA</sequence>
<evidence type="ECO:0000255" key="1">
    <source>
        <dbReference type="PROSITE-ProRule" id="PRU00037"/>
    </source>
</evidence>
<evidence type="ECO:0000255" key="2">
    <source>
        <dbReference type="PROSITE-ProRule" id="PRU00042"/>
    </source>
</evidence>
<evidence type="ECO:0000256" key="3">
    <source>
        <dbReference type="SAM" id="MobiDB-lite"/>
    </source>
</evidence>
<evidence type="ECO:0000269" key="4">
    <source>
    </source>
</evidence>
<evidence type="ECO:0000269" key="5">
    <source>
    </source>
</evidence>
<evidence type="ECO:0000269" key="6">
    <source>
    </source>
</evidence>
<evidence type="ECO:0000269" key="7">
    <source>
    </source>
</evidence>
<evidence type="ECO:0000269" key="8">
    <source>
    </source>
</evidence>
<evidence type="ECO:0000269" key="9">
    <source>
    </source>
</evidence>
<evidence type="ECO:0000303" key="10">
    <source>
    </source>
</evidence>
<evidence type="ECO:0000303" key="11">
    <source>
    </source>
</evidence>
<evidence type="ECO:0000303" key="12">
    <source>
    </source>
</evidence>
<evidence type="ECO:0000305" key="13"/>
<evidence type="ECO:0000312" key="14">
    <source>
        <dbReference type="EMBL" id="AAF58778.4"/>
    </source>
</evidence>
<evidence type="ECO:0000312" key="15">
    <source>
        <dbReference type="EMBL" id="BAC67590.1"/>
    </source>
</evidence>
<evidence type="ECO:0000312" key="16">
    <source>
        <dbReference type="FlyBase" id="FBgn0283521"/>
    </source>
</evidence>
<reference evidence="13 15" key="1">
    <citation type="journal article" date="2003" name="Gene">
        <title>Drosophila lola encodes a family of BTB-transcription regulators with highly variable C-terminal domains containing zinc finger motifs.</title>
        <authorList>
            <person name="Ohsako T."/>
            <person name="Horiuchi T."/>
            <person name="Matsuo T."/>
            <person name="Komaya S."/>
            <person name="Aigaki T."/>
        </authorList>
    </citation>
    <scope>NUCLEOTIDE SEQUENCE [MRNA] (ISOFORMS J; P; Q AND Z)</scope>
    <source>
        <strain evidence="15">Canton-S</strain>
        <tissue evidence="7">Embryo</tissue>
        <tissue evidence="7">Larva</tissue>
        <tissue evidence="7">Pupae</tissue>
    </source>
</reference>
<reference evidence="14" key="2">
    <citation type="journal article" date="2000" name="Science">
        <title>The genome sequence of Drosophila melanogaster.</title>
        <authorList>
            <person name="Adams M.D."/>
            <person name="Celniker S.E."/>
            <person name="Holt R.A."/>
            <person name="Evans C.A."/>
            <person name="Gocayne J.D."/>
            <person name="Amanatides P.G."/>
            <person name="Scherer S.E."/>
            <person name="Li P.W."/>
            <person name="Hoskins R.A."/>
            <person name="Galle R.F."/>
            <person name="George R.A."/>
            <person name="Lewis S.E."/>
            <person name="Richards S."/>
            <person name="Ashburner M."/>
            <person name="Henderson S.N."/>
            <person name="Sutton G.G."/>
            <person name="Wortman J.R."/>
            <person name="Yandell M.D."/>
            <person name="Zhang Q."/>
            <person name="Chen L.X."/>
            <person name="Brandon R.C."/>
            <person name="Rogers Y.-H.C."/>
            <person name="Blazej R.G."/>
            <person name="Champe M."/>
            <person name="Pfeiffer B.D."/>
            <person name="Wan K.H."/>
            <person name="Doyle C."/>
            <person name="Baxter E.G."/>
            <person name="Helt G."/>
            <person name="Nelson C.R."/>
            <person name="Miklos G.L.G."/>
            <person name="Abril J.F."/>
            <person name="Agbayani A."/>
            <person name="An H.-J."/>
            <person name="Andrews-Pfannkoch C."/>
            <person name="Baldwin D."/>
            <person name="Ballew R.M."/>
            <person name="Basu A."/>
            <person name="Baxendale J."/>
            <person name="Bayraktaroglu L."/>
            <person name="Beasley E.M."/>
            <person name="Beeson K.Y."/>
            <person name="Benos P.V."/>
            <person name="Berman B.P."/>
            <person name="Bhandari D."/>
            <person name="Bolshakov S."/>
            <person name="Borkova D."/>
            <person name="Botchan M.R."/>
            <person name="Bouck J."/>
            <person name="Brokstein P."/>
            <person name="Brottier P."/>
            <person name="Burtis K.C."/>
            <person name="Busam D.A."/>
            <person name="Butler H."/>
            <person name="Cadieu E."/>
            <person name="Center A."/>
            <person name="Chandra I."/>
            <person name="Cherry J.M."/>
            <person name="Cawley S."/>
            <person name="Dahlke C."/>
            <person name="Davenport L.B."/>
            <person name="Davies P."/>
            <person name="de Pablos B."/>
            <person name="Delcher A."/>
            <person name="Deng Z."/>
            <person name="Mays A.D."/>
            <person name="Dew I."/>
            <person name="Dietz S.M."/>
            <person name="Dodson K."/>
            <person name="Doup L.E."/>
            <person name="Downes M."/>
            <person name="Dugan-Rocha S."/>
            <person name="Dunkov B.C."/>
            <person name="Dunn P."/>
            <person name="Durbin K.J."/>
            <person name="Evangelista C.C."/>
            <person name="Ferraz C."/>
            <person name="Ferriera S."/>
            <person name="Fleischmann W."/>
            <person name="Fosler C."/>
            <person name="Gabrielian A.E."/>
            <person name="Garg N.S."/>
            <person name="Gelbart W.M."/>
            <person name="Glasser K."/>
            <person name="Glodek A."/>
            <person name="Gong F."/>
            <person name="Gorrell J.H."/>
            <person name="Gu Z."/>
            <person name="Guan P."/>
            <person name="Harris M."/>
            <person name="Harris N.L."/>
            <person name="Harvey D.A."/>
            <person name="Heiman T.J."/>
            <person name="Hernandez J.R."/>
            <person name="Houck J."/>
            <person name="Hostin D."/>
            <person name="Houston K.A."/>
            <person name="Howland T.J."/>
            <person name="Wei M.-H."/>
            <person name="Ibegwam C."/>
            <person name="Jalali M."/>
            <person name="Kalush F."/>
            <person name="Karpen G.H."/>
            <person name="Ke Z."/>
            <person name="Kennison J.A."/>
            <person name="Ketchum K.A."/>
            <person name="Kimmel B.E."/>
            <person name="Kodira C.D."/>
            <person name="Kraft C.L."/>
            <person name="Kravitz S."/>
            <person name="Kulp D."/>
            <person name="Lai Z."/>
            <person name="Lasko P."/>
            <person name="Lei Y."/>
            <person name="Levitsky A.A."/>
            <person name="Li J.H."/>
            <person name="Li Z."/>
            <person name="Liang Y."/>
            <person name="Lin X."/>
            <person name="Liu X."/>
            <person name="Mattei B."/>
            <person name="McIntosh T.C."/>
            <person name="McLeod M.P."/>
            <person name="McPherson D."/>
            <person name="Merkulov G."/>
            <person name="Milshina N.V."/>
            <person name="Mobarry C."/>
            <person name="Morris J."/>
            <person name="Moshrefi A."/>
            <person name="Mount S.M."/>
            <person name="Moy M."/>
            <person name="Murphy B."/>
            <person name="Murphy L."/>
            <person name="Muzny D.M."/>
            <person name="Nelson D.L."/>
            <person name="Nelson D.R."/>
            <person name="Nelson K.A."/>
            <person name="Nixon K."/>
            <person name="Nusskern D.R."/>
            <person name="Pacleb J.M."/>
            <person name="Palazzolo M."/>
            <person name="Pittman G.S."/>
            <person name="Pan S."/>
            <person name="Pollard J."/>
            <person name="Puri V."/>
            <person name="Reese M.G."/>
            <person name="Reinert K."/>
            <person name="Remington K."/>
            <person name="Saunders R.D.C."/>
            <person name="Scheeler F."/>
            <person name="Shen H."/>
            <person name="Shue B.C."/>
            <person name="Siden-Kiamos I."/>
            <person name="Simpson M."/>
            <person name="Skupski M.P."/>
            <person name="Smith T.J."/>
            <person name="Spier E."/>
            <person name="Spradling A.C."/>
            <person name="Stapleton M."/>
            <person name="Strong R."/>
            <person name="Sun E."/>
            <person name="Svirskas R."/>
            <person name="Tector C."/>
            <person name="Turner R."/>
            <person name="Venter E."/>
            <person name="Wang A.H."/>
            <person name="Wang X."/>
            <person name="Wang Z.-Y."/>
            <person name="Wassarman D.A."/>
            <person name="Weinstock G.M."/>
            <person name="Weissenbach J."/>
            <person name="Williams S.M."/>
            <person name="Woodage T."/>
            <person name="Worley K.C."/>
            <person name="Wu D."/>
            <person name="Yang S."/>
            <person name="Yao Q.A."/>
            <person name="Ye J."/>
            <person name="Yeh R.-F."/>
            <person name="Zaveri J.S."/>
            <person name="Zhan M."/>
            <person name="Zhang G."/>
            <person name="Zhao Q."/>
            <person name="Zheng L."/>
            <person name="Zheng X.H."/>
            <person name="Zhong F.N."/>
            <person name="Zhong W."/>
            <person name="Zhou X."/>
            <person name="Zhu S.C."/>
            <person name="Zhu X."/>
            <person name="Smith H.O."/>
            <person name="Gibbs R.A."/>
            <person name="Myers E.W."/>
            <person name="Rubin G.M."/>
            <person name="Venter J.C."/>
        </authorList>
    </citation>
    <scope>NUCLEOTIDE SEQUENCE [LARGE SCALE GENOMIC DNA]</scope>
    <source>
        <strain evidence="4">Berkeley</strain>
    </source>
</reference>
<reference evidence="13 14" key="3">
    <citation type="journal article" date="2002" name="Genome Biol.">
        <title>Annotation of the Drosophila melanogaster euchromatic genome: a systematic review.</title>
        <authorList>
            <person name="Misra S."/>
            <person name="Crosby M.A."/>
            <person name="Mungall C.J."/>
            <person name="Matthews B.B."/>
            <person name="Campbell K.S."/>
            <person name="Hradecky P."/>
            <person name="Huang Y."/>
            <person name="Kaminker J.S."/>
            <person name="Millburn G.H."/>
            <person name="Prochnik S.E."/>
            <person name="Smith C.D."/>
            <person name="Tupy J.L."/>
            <person name="Whitfield E.J."/>
            <person name="Bayraktaroglu L."/>
            <person name="Berman B.P."/>
            <person name="Bettencourt B.R."/>
            <person name="Celniker S.E."/>
            <person name="de Grey A.D.N.J."/>
            <person name="Drysdale R.A."/>
            <person name="Harris N.L."/>
            <person name="Richter J."/>
            <person name="Russo S."/>
            <person name="Schroeder A.J."/>
            <person name="Shu S.Q."/>
            <person name="Stapleton M."/>
            <person name="Yamada C."/>
            <person name="Ashburner M."/>
            <person name="Gelbart W.M."/>
            <person name="Rubin G.M."/>
            <person name="Lewis S.E."/>
        </authorList>
    </citation>
    <scope>GENOME REANNOTATION</scope>
    <scope>ALTERNATIVE SPLICING</scope>
    <source>
        <strain>Berkeley</strain>
    </source>
</reference>
<reference key="4">
    <citation type="submission" date="2006-10" db="EMBL/GenBank/DDBJ databases">
        <authorList>
            <person name="Stapleton M."/>
            <person name="Carlson J.W."/>
            <person name="Frise E."/>
            <person name="Kapadia B."/>
            <person name="Park S."/>
            <person name="Wan K.H."/>
            <person name="Yu C."/>
            <person name="Celniker S.E."/>
        </authorList>
    </citation>
    <scope>NUCLEOTIDE SEQUENCE [LARGE SCALE MRNA]</scope>
    <source>
        <strain>Berkeley</strain>
    </source>
</reference>
<reference evidence="13" key="5">
    <citation type="journal article" date="1994" name="Development">
        <title>Lola encodes a putative transcription factor required for axon growth and guidance in Drosophila.</title>
        <authorList>
            <person name="Giniger E."/>
            <person name="Tietje K."/>
            <person name="Jan L.Y."/>
            <person name="Jan Y.N."/>
        </authorList>
    </citation>
    <scope>FUNCTION</scope>
    <scope>SUBCELLULAR LOCATION</scope>
    <scope>DEVELOPMENTAL STAGE</scope>
</reference>
<reference evidence="13" key="6">
    <citation type="journal article" date="2002" name="Development">
        <title>Lola regulates midline crossing of CNS axons in Drosophila.</title>
        <authorList>
            <person name="Crowner D."/>
            <person name="Madden K."/>
            <person name="Goeke S."/>
            <person name="Giniger E."/>
        </authorList>
    </citation>
    <scope>FUNCTION</scope>
    <scope>MUTAGENESIS OF ALA-107</scope>
</reference>
<reference key="7">
    <citation type="journal article" date="2003" name="Genes Dev.">
        <title>Alternative trans-splicing of constant and variable exons of a Drosophila axon guidance gene, lola.</title>
        <authorList>
            <person name="Horiuchi T."/>
            <person name="Giniger E."/>
            <person name="Aigaki T."/>
        </authorList>
    </citation>
    <scope>TRANS-SPLICING</scope>
</reference>
<reference evidence="13" key="8">
    <citation type="journal article" date="2003" name="J. Biol. Chem.">
        <title>A developmentally regulated splice variant from the complex lola locus encoding multiple different zinc finger domain proteins interacts with the chromosomal kinase JIL-1.</title>
        <authorList>
            <person name="Zhang W."/>
            <person name="Wang Y."/>
            <person name="Long J."/>
            <person name="Girton J."/>
            <person name="Johansen J."/>
            <person name="Johansen K.M."/>
        </authorList>
    </citation>
    <scope>DEVELOPMENTAL STAGE</scope>
</reference>
<reference key="9">
    <citation type="journal article" date="2003" name="Nat. Neurosci.">
        <title>Alternative splicing of lola generates 19 transcription factors controlling axon guidance in Drosophila.</title>
        <authorList>
            <person name="Goeke S."/>
            <person name="Greene E.A."/>
            <person name="Grant P.K."/>
            <person name="Gates M.A."/>
            <person name="Crowner D."/>
            <person name="Aigaki T."/>
            <person name="Giniger E."/>
        </authorList>
    </citation>
    <scope>DEVELOPMENTAL STAGE</scope>
    <scope>TISSUE SPECIFICITY</scope>
</reference>
<proteinExistence type="evidence at protein level"/>
<dbReference type="EMBL" id="AB107273">
    <property type="protein sequence ID" value="BAC67578.1"/>
    <property type="molecule type" value="mRNA"/>
</dbReference>
<dbReference type="EMBL" id="AB107276">
    <property type="protein sequence ID" value="BAC67581.1"/>
    <property type="molecule type" value="mRNA"/>
</dbReference>
<dbReference type="EMBL" id="AB107285">
    <property type="protein sequence ID" value="BAC67590.1"/>
    <property type="molecule type" value="mRNA"/>
</dbReference>
<dbReference type="EMBL" id="AB107286">
    <property type="protein sequence ID" value="BAC67591.1"/>
    <property type="molecule type" value="mRNA"/>
</dbReference>
<dbReference type="EMBL" id="AB107293">
    <property type="protein sequence ID" value="BAC67598.1"/>
    <property type="molecule type" value="mRNA"/>
</dbReference>
<dbReference type="EMBL" id="AB107296">
    <property type="protein sequence ID" value="BAC67601.1"/>
    <property type="molecule type" value="mRNA"/>
</dbReference>
<dbReference type="EMBL" id="AB107305">
    <property type="protein sequence ID" value="BAC67610.1"/>
    <property type="molecule type" value="mRNA"/>
</dbReference>
<dbReference type="EMBL" id="AB107306">
    <property type="protein sequence ID" value="BAC67611.1"/>
    <property type="molecule type" value="mRNA"/>
</dbReference>
<dbReference type="EMBL" id="AB107313">
    <property type="protein sequence ID" value="BAC67618.1"/>
    <property type="molecule type" value="mRNA"/>
</dbReference>
<dbReference type="EMBL" id="AB107316">
    <property type="protein sequence ID" value="BAC67621.1"/>
    <property type="molecule type" value="mRNA"/>
</dbReference>
<dbReference type="EMBL" id="AB107325">
    <property type="protein sequence ID" value="BAC67630.1"/>
    <property type="molecule type" value="mRNA"/>
</dbReference>
<dbReference type="EMBL" id="AB107326">
    <property type="protein sequence ID" value="BAC67631.1"/>
    <property type="molecule type" value="mRNA"/>
</dbReference>
<dbReference type="EMBL" id="AB107333">
    <property type="protein sequence ID" value="BAC67638.1"/>
    <property type="molecule type" value="mRNA"/>
</dbReference>
<dbReference type="EMBL" id="AB107336">
    <property type="protein sequence ID" value="BAC67641.1"/>
    <property type="molecule type" value="mRNA"/>
</dbReference>
<dbReference type="EMBL" id="AB107345">
    <property type="protein sequence ID" value="BAC67650.1"/>
    <property type="molecule type" value="mRNA"/>
</dbReference>
<dbReference type="EMBL" id="AB107346">
    <property type="protein sequence ID" value="BAC67651.1"/>
    <property type="molecule type" value="mRNA"/>
</dbReference>
<dbReference type="EMBL" id="AE013599">
    <property type="protein sequence ID" value="AAF58778.4"/>
    <property type="molecule type" value="Genomic_DNA"/>
</dbReference>
<dbReference type="EMBL" id="AE013599">
    <property type="protein sequence ID" value="AAF58779.3"/>
    <property type="molecule type" value="Genomic_DNA"/>
</dbReference>
<dbReference type="EMBL" id="AE013599">
    <property type="protein sequence ID" value="AAM68768.2"/>
    <property type="molecule type" value="Genomic_DNA"/>
</dbReference>
<dbReference type="EMBL" id="AE013599">
    <property type="protein sequence ID" value="AAO41429.1"/>
    <property type="molecule type" value="Genomic_DNA"/>
</dbReference>
<dbReference type="EMBL" id="AE013599">
    <property type="protein sequence ID" value="AAZ52818.1"/>
    <property type="molecule type" value="Genomic_DNA"/>
</dbReference>
<dbReference type="EMBL" id="BT029109">
    <property type="protein sequence ID" value="ABJ17042.1"/>
    <property type="molecule type" value="mRNA"/>
</dbReference>
<dbReference type="RefSeq" id="NP_001027400.1">
    <molecule id="Q9V5M6-5"/>
    <property type="nucleotide sequence ID" value="NM_001032229.3"/>
</dbReference>
<dbReference type="RefSeq" id="NP_788310.2">
    <molecule id="Q9V5M6-2"/>
    <property type="nucleotide sequence ID" value="NM_176130.5"/>
</dbReference>
<dbReference type="RefSeq" id="NP_788311.2">
    <molecule id="Q9V5M6-1"/>
    <property type="nucleotide sequence ID" value="NM_176131.5"/>
</dbReference>
<dbReference type="RefSeq" id="NP_788319.1">
    <molecule id="Q9V5M6-3"/>
    <property type="nucleotide sequence ID" value="NM_176139.3"/>
</dbReference>
<dbReference type="SMR" id="Q9V5M6"/>
<dbReference type="BioGRID" id="69126">
    <property type="interactions" value="58"/>
</dbReference>
<dbReference type="IntAct" id="Q9V5M6">
    <property type="interactions" value="1"/>
</dbReference>
<dbReference type="DNASU" id="44548"/>
<dbReference type="EnsemblMetazoa" id="FBtr0089355">
    <molecule id="Q9V5M6-1"/>
    <property type="protein sequence ID" value="FBpp0088389"/>
    <property type="gene ID" value="FBgn0283521"/>
</dbReference>
<dbReference type="EnsemblMetazoa" id="FBtr0089356">
    <molecule id="Q9V5M6-3"/>
    <property type="protein sequence ID" value="FBpp0088390"/>
    <property type="gene ID" value="FBgn0283521"/>
</dbReference>
<dbReference type="EnsemblMetazoa" id="FBtr0089360">
    <molecule id="Q9V5M6-2"/>
    <property type="protein sequence ID" value="FBpp0088394"/>
    <property type="gene ID" value="FBgn0283521"/>
</dbReference>
<dbReference type="EnsemblMetazoa" id="FBtr0100286">
    <molecule id="Q9V5M6-5"/>
    <property type="protein sequence ID" value="FBpp0099680"/>
    <property type="gene ID" value="FBgn0283521"/>
</dbReference>
<dbReference type="GeneID" id="44548"/>
<dbReference type="AGR" id="FB:FBgn0283521"/>
<dbReference type="CTD" id="44548"/>
<dbReference type="FlyBase" id="FBgn0283521">
    <property type="gene designation" value="lola"/>
</dbReference>
<dbReference type="VEuPathDB" id="VectorBase:FBgn0283521"/>
<dbReference type="GeneTree" id="ENSGT00940000174551"/>
<dbReference type="HOGENOM" id="CLU_010740_2_0_1"/>
<dbReference type="OMA" id="RRHMRKE"/>
<dbReference type="OrthoDB" id="407106at2759"/>
<dbReference type="SignaLink" id="Q9V5M6"/>
<dbReference type="BioGRID-ORCS" id="44548">
    <property type="hits" value="1 hit in 1 CRISPR screen"/>
</dbReference>
<dbReference type="ChiTaRS" id="lola">
    <property type="organism name" value="fly"/>
</dbReference>
<dbReference type="GenomeRNAi" id="44548"/>
<dbReference type="Proteomes" id="UP000000803">
    <property type="component" value="Chromosome 2R"/>
</dbReference>
<dbReference type="Bgee" id="FBgn0283521">
    <property type="expression patterns" value="Expressed in adult differentiating enterocyte in digestive tract and 312 other cell types or tissues"/>
</dbReference>
<dbReference type="ExpressionAtlas" id="Q9V5M6">
    <property type="expression patterns" value="baseline and differential"/>
</dbReference>
<dbReference type="GO" id="GO:0005654">
    <property type="term" value="C:nucleoplasm"/>
    <property type="evidence" value="ECO:0007005"/>
    <property type="project" value="FlyBase"/>
</dbReference>
<dbReference type="GO" id="GO:0005634">
    <property type="term" value="C:nucleus"/>
    <property type="evidence" value="ECO:0000314"/>
    <property type="project" value="UniProtKB"/>
</dbReference>
<dbReference type="GO" id="GO:0003677">
    <property type="term" value="F:DNA binding"/>
    <property type="evidence" value="ECO:0007669"/>
    <property type="project" value="UniProtKB-KW"/>
</dbReference>
<dbReference type="GO" id="GO:0003700">
    <property type="term" value="F:DNA-binding transcription factor activity"/>
    <property type="evidence" value="ECO:0000250"/>
    <property type="project" value="FlyBase"/>
</dbReference>
<dbReference type="GO" id="GO:0008270">
    <property type="term" value="F:zinc ion binding"/>
    <property type="evidence" value="ECO:0007669"/>
    <property type="project" value="UniProtKB-KW"/>
</dbReference>
<dbReference type="GO" id="GO:0007411">
    <property type="term" value="P:axon guidance"/>
    <property type="evidence" value="ECO:0000315"/>
    <property type="project" value="UniProtKB"/>
</dbReference>
<dbReference type="GO" id="GO:0016199">
    <property type="term" value="P:axon midline choice point recognition"/>
    <property type="evidence" value="ECO:0000315"/>
    <property type="project" value="UniProtKB"/>
</dbReference>
<dbReference type="GO" id="GO:0007409">
    <property type="term" value="P:axonogenesis"/>
    <property type="evidence" value="ECO:0000315"/>
    <property type="project" value="UniProtKB"/>
</dbReference>
<dbReference type="GO" id="GO:0048813">
    <property type="term" value="P:dendrite morphogenesis"/>
    <property type="evidence" value="ECO:0000315"/>
    <property type="project" value="FlyBase"/>
</dbReference>
<dbReference type="GO" id="GO:0008406">
    <property type="term" value="P:gonad development"/>
    <property type="evidence" value="ECO:0000315"/>
    <property type="project" value="FlyBase"/>
</dbReference>
<dbReference type="GO" id="GO:0035167">
    <property type="term" value="P:larval lymph gland hemopoiesis"/>
    <property type="evidence" value="ECO:0000315"/>
    <property type="project" value="FlyBase"/>
</dbReference>
<dbReference type="GO" id="GO:0007526">
    <property type="term" value="P:larval somatic muscle development"/>
    <property type="evidence" value="ECO:0000315"/>
    <property type="project" value="FlyBase"/>
</dbReference>
<dbReference type="GO" id="GO:0045476">
    <property type="term" value="P:nurse cell apoptotic process"/>
    <property type="evidence" value="ECO:0000315"/>
    <property type="project" value="FlyBase"/>
</dbReference>
<dbReference type="GO" id="GO:0045893">
    <property type="term" value="P:positive regulation of DNA-templated transcription"/>
    <property type="evidence" value="ECO:0000250"/>
    <property type="project" value="UniProtKB"/>
</dbReference>
<dbReference type="GO" id="GO:0007464">
    <property type="term" value="P:R3/R4 cell fate commitment"/>
    <property type="evidence" value="ECO:0000315"/>
    <property type="project" value="FlyBase"/>
</dbReference>
<dbReference type="GO" id="GO:0045467">
    <property type="term" value="P:R7 cell development"/>
    <property type="evidence" value="ECO:0000315"/>
    <property type="project" value="FlyBase"/>
</dbReference>
<dbReference type="GO" id="GO:0006355">
    <property type="term" value="P:regulation of DNA-templated transcription"/>
    <property type="evidence" value="ECO:0000315"/>
    <property type="project" value="FlyBase"/>
</dbReference>
<dbReference type="GO" id="GO:0006357">
    <property type="term" value="P:regulation of transcription by RNA polymerase II"/>
    <property type="evidence" value="ECO:0000318"/>
    <property type="project" value="GO_Central"/>
</dbReference>
<dbReference type="CDD" id="cd18315">
    <property type="entry name" value="BTB_POZ_BAB-like"/>
    <property type="match status" value="1"/>
</dbReference>
<dbReference type="FunFam" id="3.30.710.10:FF:000091">
    <property type="entry name" value="Lola, isoform F"/>
    <property type="match status" value="1"/>
</dbReference>
<dbReference type="Gene3D" id="3.30.160.60">
    <property type="entry name" value="Classic Zinc Finger"/>
    <property type="match status" value="1"/>
</dbReference>
<dbReference type="Gene3D" id="3.30.710.10">
    <property type="entry name" value="Potassium Channel Kv1.1, Chain A"/>
    <property type="match status" value="1"/>
</dbReference>
<dbReference type="InterPro" id="IPR000210">
    <property type="entry name" value="BTB/POZ_dom"/>
</dbReference>
<dbReference type="InterPro" id="IPR051095">
    <property type="entry name" value="Dros_DevTransReg"/>
</dbReference>
<dbReference type="InterPro" id="IPR011333">
    <property type="entry name" value="SKP1/BTB/POZ_sf"/>
</dbReference>
<dbReference type="InterPro" id="IPR036236">
    <property type="entry name" value="Znf_C2H2_sf"/>
</dbReference>
<dbReference type="InterPro" id="IPR013087">
    <property type="entry name" value="Znf_C2H2_type"/>
</dbReference>
<dbReference type="PANTHER" id="PTHR23110">
    <property type="entry name" value="BTB DOMAIN TRANSCRIPTION FACTOR"/>
    <property type="match status" value="1"/>
</dbReference>
<dbReference type="PANTHER" id="PTHR23110:SF111">
    <property type="entry name" value="LONGITUDINALS LACKING PROTEIN, ISOFORMS F_I_K_T"/>
    <property type="match status" value="1"/>
</dbReference>
<dbReference type="Pfam" id="PF00651">
    <property type="entry name" value="BTB"/>
    <property type="match status" value="1"/>
</dbReference>
<dbReference type="SMART" id="SM00225">
    <property type="entry name" value="BTB"/>
    <property type="match status" value="1"/>
</dbReference>
<dbReference type="SUPFAM" id="SSF57667">
    <property type="entry name" value="beta-beta-alpha zinc fingers"/>
    <property type="match status" value="1"/>
</dbReference>
<dbReference type="SUPFAM" id="SSF54695">
    <property type="entry name" value="POZ domain"/>
    <property type="match status" value="1"/>
</dbReference>
<dbReference type="PROSITE" id="PS50097">
    <property type="entry name" value="BTB"/>
    <property type="match status" value="1"/>
</dbReference>
<dbReference type="PROSITE" id="PS50157">
    <property type="entry name" value="ZINC_FINGER_C2H2_2"/>
    <property type="match status" value="2"/>
</dbReference>
<organism>
    <name type="scientific">Drosophila melanogaster</name>
    <name type="common">Fruit fly</name>
    <dbReference type="NCBI Taxonomy" id="7227"/>
    <lineage>
        <taxon>Eukaryota</taxon>
        <taxon>Metazoa</taxon>
        <taxon>Ecdysozoa</taxon>
        <taxon>Arthropoda</taxon>
        <taxon>Hexapoda</taxon>
        <taxon>Insecta</taxon>
        <taxon>Pterygota</taxon>
        <taxon>Neoptera</taxon>
        <taxon>Endopterygota</taxon>
        <taxon>Diptera</taxon>
        <taxon>Brachycera</taxon>
        <taxon>Muscomorpha</taxon>
        <taxon>Ephydroidea</taxon>
        <taxon>Drosophilidae</taxon>
        <taxon>Drosophila</taxon>
        <taxon>Sophophora</taxon>
    </lineage>
</organism>
<comment type="function">
    <text evidence="5 9">Putative transcription factor required for axon growth and guidance in the central and peripheral nervous systems. Repels CNS axons away from the midline by promoting the expression of the midline repellent sli and its receptor robo.</text>
</comment>
<comment type="subcellular location">
    <subcellularLocation>
        <location evidence="9">Nucleus</location>
    </subcellularLocation>
</comment>
<comment type="alternative products">
    <event type="alternative splicing"/>
    <isoform>
        <id>Q9V5M6-1</id>
        <name evidence="7">P</name>
        <name evidence="11">Ohsako-N</name>
        <sequence type="displayed"/>
    </isoform>
    <isoform>
        <id>Q9V5M6-2</id>
        <name evidence="7">J</name>
        <name evidence="11">Ohsako-O</name>
        <sequence type="described" ref="VSP_051809 VSP_051812"/>
    </isoform>
    <isoform>
        <id>Q9V5M6-3</id>
        <name evidence="7">Q</name>
        <name evidence="11">Ohsako-B</name>
        <sequence type="described" ref="VSP_051807 VSP_051810"/>
    </isoform>
    <isoform>
        <id>Q9V5M6-4</id>
        <name evidence="7">S</name>
        <sequence type="described" ref="VSP_017255 VSP_017256"/>
    </isoform>
    <isoform>
        <id>Q9V5M6-5</id>
        <name>Z</name>
        <name>Ohsako-E</name>
        <sequence type="described" ref="VSP_051808 VSP_051811"/>
    </isoform>
    <isoform>
        <id>Q7KQZ4-2</id>
        <name evidence="7">A</name>
        <name evidence="11">Ohsako-D</name>
        <sequence type="external"/>
    </isoform>
    <isoform>
        <id>Q7KQZ4-1</id>
        <name>B</name>
        <name evidence="7">C</name>
        <name evidence="11">Ohsako-L</name>
        <sequence type="external"/>
    </isoform>
    <isoform>
        <id>Q7KQZ4-3</id>
        <name evidence="10">D</name>
        <name>E</name>
        <name evidence="11">Ohsako-F</name>
        <sequence type="external"/>
    </isoform>
    <isoform>
        <id>Q867Z4-2</id>
        <name evidence="7">F</name>
        <name evidence="11">Ohsako-I</name>
        <sequence type="external"/>
    </isoform>
    <isoform>
        <id>P42283-1</id>
        <name evidence="7">G</name>
        <name evidence="12">Long</name>
        <name evidence="11">Ohsako-T</name>
        <name>R</name>
        <sequence type="external"/>
    </isoform>
    <isoform>
        <id>P42284-3</id>
        <name evidence="7">H</name>
        <name evidence="11">Ohsako-M</name>
        <sequence type="external"/>
    </isoform>
    <isoform>
        <id>Q867Z4-1</id>
        <name evidence="7">I</name>
        <name evidence="11">Ohsako-K</name>
        <sequence type="external"/>
    </isoform>
    <isoform>
        <id>Q867Z4-3</id>
        <name evidence="7">K</name>
        <name evidence="11">Ohsako-H</name>
        <sequence type="external"/>
    </isoform>
    <isoform>
        <id>Q7KQZ4-4</id>
        <name evidence="7">L</name>
        <name evidence="11">Ohsako-C</name>
        <sequence type="external"/>
    </isoform>
    <isoform>
        <id>P42284-1</id>
        <name evidence="7">M</name>
        <name evidence="12">Short</name>
        <name evidence="11">Ohsako-A</name>
        <sequence type="external"/>
    </isoform>
    <isoform>
        <id>Q9V5M3-1</id>
        <name evidence="10">N</name>
        <sequence type="external"/>
    </isoform>
    <isoform>
        <id>Q9V5M3-2</id>
        <name evidence="7">O</name>
        <name evidence="11">Ohsako-P</name>
        <sequence type="external"/>
    </isoform>
    <isoform>
        <id>Q867Z4-5</id>
        <name evidence="7">T</name>
        <name evidence="10">U</name>
        <name evidence="11">Ohsako-J</name>
        <sequence type="external"/>
    </isoform>
    <isoform>
        <id>P42284-2</id>
        <name evidence="7">V</name>
        <name evidence="11">Ohsako-G</name>
        <sequence type="external"/>
    </isoform>
    <isoform>
        <id>Q9V5M3-3</id>
        <name evidence="7">W</name>
        <name evidence="11">Ohsako-Q</name>
        <sequence type="external"/>
    </isoform>
    <isoform>
        <id>Q9V5M3-4</id>
        <name evidence="7">X</name>
        <name evidence="11">Ohsako-S</name>
        <sequence type="external"/>
    </isoform>
    <isoform>
        <id>Q9V5M3-5</id>
        <name evidence="7">Y</name>
        <name evidence="11">Ohsako-R</name>
        <sequence type="external"/>
    </isoform>
    <text>Some isoforms may be generated by alternative trans-splicing of exons sequentially encoded by the same DNA strand.</text>
</comment>
<comment type="tissue specificity">
    <text evidence="8">By stage 11, isoform Q, isoform P and isoform Z are expressed throughout the mesoderm. From stage 15, expression of isoform P expands to all tissues, whereas expression of isoform Z and isoform Q becomes restricted during later stages; starting from stage 14 to 16, isoform Z is expressed in muscle, and isoform Q and isoform Z are expressed in the CNS. For some isoforms, expression is also seen in specific types of cells in the embryo; isoform Z is expressed in the ventral furrow at stage 5, and isoform Q is expressed around the tracheal pits at stage 11. Isoform Z also shows transient enrichment in a dorsal cell layer in the CNS at stages 13 and 14.</text>
</comment>
<comment type="developmental stage">
    <text evidence="6 8 9">Expressed both maternally and zygotically. At least one isoform is present at each developmental stage.</text>
</comment>